<reference key="1">
    <citation type="submission" date="2008-08" db="EMBL/GenBank/DDBJ databases">
        <title>The complete genome sequence of Thermodesulfovibrio yellowstonii strain ATCC 51303 / DSM 11347 / YP87.</title>
        <authorList>
            <person name="Dodson R.J."/>
            <person name="Durkin A.S."/>
            <person name="Wu M."/>
            <person name="Eisen J."/>
            <person name="Sutton G."/>
        </authorList>
    </citation>
    <scope>NUCLEOTIDE SEQUENCE [LARGE SCALE GENOMIC DNA]</scope>
    <source>
        <strain>ATCC 51303 / DSM 11347 / YP87</strain>
    </source>
</reference>
<dbReference type="EC" id="6.1.1.14" evidence="1"/>
<dbReference type="EMBL" id="CP001147">
    <property type="protein sequence ID" value="ACI20176.1"/>
    <property type="molecule type" value="Genomic_DNA"/>
</dbReference>
<dbReference type="RefSeq" id="WP_012544914.1">
    <property type="nucleotide sequence ID" value="NC_011296.1"/>
</dbReference>
<dbReference type="RefSeq" id="YP_002249886.1">
    <property type="nucleotide sequence ID" value="NC_011296.1"/>
</dbReference>
<dbReference type="SMR" id="B5YJ12"/>
<dbReference type="FunCoup" id="B5YJ12">
    <property type="interactions" value="454"/>
</dbReference>
<dbReference type="STRING" id="289376.THEYE_A2099"/>
<dbReference type="EnsemblBacteria" id="ACI20176">
    <property type="protein sequence ID" value="ACI20176"/>
    <property type="gene ID" value="THEYE_A2099"/>
</dbReference>
<dbReference type="KEGG" id="tye:THEYE_A2099"/>
<dbReference type="PATRIC" id="fig|289376.4.peg.2047"/>
<dbReference type="eggNOG" id="COG0751">
    <property type="taxonomic scope" value="Bacteria"/>
</dbReference>
<dbReference type="HOGENOM" id="CLU_007220_2_2_0"/>
<dbReference type="InParanoid" id="B5YJ12"/>
<dbReference type="OrthoDB" id="9775440at2"/>
<dbReference type="Proteomes" id="UP000000718">
    <property type="component" value="Chromosome"/>
</dbReference>
<dbReference type="GO" id="GO:0005829">
    <property type="term" value="C:cytosol"/>
    <property type="evidence" value="ECO:0000318"/>
    <property type="project" value="GO_Central"/>
</dbReference>
<dbReference type="GO" id="GO:0004814">
    <property type="term" value="F:arginine-tRNA ligase activity"/>
    <property type="evidence" value="ECO:0007669"/>
    <property type="project" value="InterPro"/>
</dbReference>
<dbReference type="GO" id="GO:0005524">
    <property type="term" value="F:ATP binding"/>
    <property type="evidence" value="ECO:0007669"/>
    <property type="project" value="UniProtKB-UniRule"/>
</dbReference>
<dbReference type="GO" id="GO:0004820">
    <property type="term" value="F:glycine-tRNA ligase activity"/>
    <property type="evidence" value="ECO:0007669"/>
    <property type="project" value="UniProtKB-UniRule"/>
</dbReference>
<dbReference type="GO" id="GO:0006420">
    <property type="term" value="P:arginyl-tRNA aminoacylation"/>
    <property type="evidence" value="ECO:0007669"/>
    <property type="project" value="InterPro"/>
</dbReference>
<dbReference type="GO" id="GO:0006426">
    <property type="term" value="P:glycyl-tRNA aminoacylation"/>
    <property type="evidence" value="ECO:0007669"/>
    <property type="project" value="UniProtKB-UniRule"/>
</dbReference>
<dbReference type="Gene3D" id="1.10.730.10">
    <property type="entry name" value="Isoleucyl-tRNA Synthetase, Domain 1"/>
    <property type="match status" value="1"/>
</dbReference>
<dbReference type="HAMAP" id="MF_00255">
    <property type="entry name" value="Gly_tRNA_synth_beta"/>
    <property type="match status" value="1"/>
</dbReference>
<dbReference type="InterPro" id="IPR008909">
    <property type="entry name" value="DALR_anticod-bd"/>
</dbReference>
<dbReference type="InterPro" id="IPR015944">
    <property type="entry name" value="Gly-tRNA-synth_bsu"/>
</dbReference>
<dbReference type="InterPro" id="IPR006194">
    <property type="entry name" value="Gly-tRNA-synth_heterodimer"/>
</dbReference>
<dbReference type="InterPro" id="IPR009080">
    <property type="entry name" value="tRNAsynth_Ia_anticodon-bd"/>
</dbReference>
<dbReference type="NCBIfam" id="TIGR00211">
    <property type="entry name" value="glyS"/>
    <property type="match status" value="1"/>
</dbReference>
<dbReference type="PANTHER" id="PTHR30075:SF2">
    <property type="entry name" value="GLYCINE--TRNA LIGASE, CHLOROPLASTIC_MITOCHONDRIAL 2"/>
    <property type="match status" value="1"/>
</dbReference>
<dbReference type="PANTHER" id="PTHR30075">
    <property type="entry name" value="GLYCYL-TRNA SYNTHETASE"/>
    <property type="match status" value="1"/>
</dbReference>
<dbReference type="Pfam" id="PF05746">
    <property type="entry name" value="DALR_1"/>
    <property type="match status" value="1"/>
</dbReference>
<dbReference type="Pfam" id="PF02092">
    <property type="entry name" value="tRNA_synt_2f"/>
    <property type="match status" value="1"/>
</dbReference>
<dbReference type="PRINTS" id="PR01045">
    <property type="entry name" value="TRNASYNTHGB"/>
</dbReference>
<dbReference type="SMART" id="SM00836">
    <property type="entry name" value="DALR_1"/>
    <property type="match status" value="1"/>
</dbReference>
<dbReference type="SUPFAM" id="SSF47323">
    <property type="entry name" value="Anticodon-binding domain of a subclass of class I aminoacyl-tRNA synthetases"/>
    <property type="match status" value="1"/>
</dbReference>
<dbReference type="SUPFAM" id="SSF109604">
    <property type="entry name" value="HD-domain/PDEase-like"/>
    <property type="match status" value="1"/>
</dbReference>
<dbReference type="PROSITE" id="PS50861">
    <property type="entry name" value="AA_TRNA_LIGASE_II_GLYAB"/>
    <property type="match status" value="1"/>
</dbReference>
<protein>
    <recommendedName>
        <fullName evidence="1">Glycine--tRNA ligase beta subunit</fullName>
        <ecNumber evidence="1">6.1.1.14</ecNumber>
    </recommendedName>
    <alternativeName>
        <fullName evidence="1">Glycyl-tRNA synthetase beta subunit</fullName>
        <shortName evidence="1">GlyRS</shortName>
    </alternativeName>
</protein>
<organism>
    <name type="scientific">Thermodesulfovibrio yellowstonii (strain ATCC 51303 / DSM 11347 / YP87)</name>
    <dbReference type="NCBI Taxonomy" id="289376"/>
    <lineage>
        <taxon>Bacteria</taxon>
        <taxon>Pseudomonadati</taxon>
        <taxon>Nitrospirota</taxon>
        <taxon>Thermodesulfovibrionia</taxon>
        <taxon>Thermodesulfovibrionales</taxon>
        <taxon>Thermodesulfovibrionaceae</taxon>
        <taxon>Thermodesulfovibrio</taxon>
    </lineage>
</organism>
<proteinExistence type="inferred from homology"/>
<accession>B5YJ12</accession>
<feature type="chain" id="PRO_1000101366" description="Glycine--tRNA ligase beta subunit">
    <location>
        <begin position="1"/>
        <end position="679"/>
    </location>
</feature>
<comment type="catalytic activity">
    <reaction evidence="1">
        <text>tRNA(Gly) + glycine + ATP = glycyl-tRNA(Gly) + AMP + diphosphate</text>
        <dbReference type="Rhea" id="RHEA:16013"/>
        <dbReference type="Rhea" id="RHEA-COMP:9664"/>
        <dbReference type="Rhea" id="RHEA-COMP:9683"/>
        <dbReference type="ChEBI" id="CHEBI:30616"/>
        <dbReference type="ChEBI" id="CHEBI:33019"/>
        <dbReference type="ChEBI" id="CHEBI:57305"/>
        <dbReference type="ChEBI" id="CHEBI:78442"/>
        <dbReference type="ChEBI" id="CHEBI:78522"/>
        <dbReference type="ChEBI" id="CHEBI:456215"/>
        <dbReference type="EC" id="6.1.1.14"/>
    </reaction>
</comment>
<comment type="subunit">
    <text evidence="1">Tetramer of two alpha and two beta subunits.</text>
</comment>
<comment type="subcellular location">
    <subcellularLocation>
        <location evidence="1">Cytoplasm</location>
    </subcellularLocation>
</comment>
<comment type="similarity">
    <text evidence="1">Belongs to the class-II aminoacyl-tRNA synthetase family.</text>
</comment>
<gene>
    <name evidence="1" type="primary">glyS</name>
    <name type="ordered locus">THEYE_A2099</name>
</gene>
<name>SYGB_THEYD</name>
<evidence type="ECO:0000255" key="1">
    <source>
        <dbReference type="HAMAP-Rule" id="MF_00255"/>
    </source>
</evidence>
<sequence>MGKILFEIGAEEIPARFIPLAISQIEENFKKITSEYRIELESIKVYATPRRLTLLAELSSEQASEEKLVWGPPVHVAFDEKGLPKESAYAFAKAQGIEVDQLQIKPKGKGNYVCAVLSKKGKKTEEVLPEILRNLFYSLNFPKMMRWGEGTLRFIRPVRWFLALYDDRFISFEIEGIKTENKTQGHRFLSENPLNIDRVDNYEFILEKAFVIVDPEKRKKIILTQAEELAKKVNGKILWNNELIEEVTYLVEFPNSVLCSFSMQYLKLPEELLITVMKDHQRYFAIIDNEGKLKNYFVVVSNTKAENEENIKKGAERVIKARFEDARFYYEEDLKKGLVNLLEATKGIIYHKKLGSLYDKSLRIIRIAERLSDRLIPEKTELVKIAANYCKADLASGVVGEFPELQGIMGGYYAKNAGMPEEVFLAIREHYLPKGFTDEIPSNDIGCIISLADKLDHIATFFYLGEIPSGTEDPFGLRRAANGIISILLKKKYSLSLLETVSMIQEFVDEKLKEQISIFIVQRFESYLESTGYDVNLIKTISDFILIRPVYEIKKRLEAVSLFRSKEDFEEFFLAVKRVSNIIKNYEKFELNPELFSSEEEKKLFNEIEKYKENLYEYLNSQQFFEALNYLHKLTPTINNFFDNVLVMDKDEKIKRNRLALLQHLSELLKSVADISRLY</sequence>
<keyword id="KW-0030">Aminoacyl-tRNA synthetase</keyword>
<keyword id="KW-0067">ATP-binding</keyword>
<keyword id="KW-0963">Cytoplasm</keyword>
<keyword id="KW-0436">Ligase</keyword>
<keyword id="KW-0547">Nucleotide-binding</keyword>
<keyword id="KW-0648">Protein biosynthesis</keyword>
<keyword id="KW-1185">Reference proteome</keyword>